<protein>
    <recommendedName>
        <fullName evidence="1">Elongation factor 4</fullName>
        <shortName evidence="1">EF-4</shortName>
        <ecNumber evidence="1">3.6.5.n1</ecNumber>
    </recommendedName>
    <alternativeName>
        <fullName evidence="1">Ribosomal back-translocase LepA</fullName>
    </alternativeName>
</protein>
<name>LEPA_CLOD6</name>
<dbReference type="EC" id="3.6.5.n1" evidence="1"/>
<dbReference type="EMBL" id="AM180355">
    <property type="protein sequence ID" value="CAJ69354.1"/>
    <property type="molecule type" value="Genomic_DNA"/>
</dbReference>
<dbReference type="RefSeq" id="WP_003416556.1">
    <property type="nucleotide sequence ID" value="NZ_JAUPES010000003.1"/>
</dbReference>
<dbReference type="RefSeq" id="YP_001088981.1">
    <property type="nucleotide sequence ID" value="NC_009089.1"/>
</dbReference>
<dbReference type="SMR" id="Q182F4"/>
<dbReference type="STRING" id="272563.CD630_24670"/>
<dbReference type="EnsemblBacteria" id="CAJ69354">
    <property type="protein sequence ID" value="CAJ69354"/>
    <property type="gene ID" value="CD630_24670"/>
</dbReference>
<dbReference type="KEGG" id="cdf:CD630_24670"/>
<dbReference type="KEGG" id="pdc:CDIF630_02713"/>
<dbReference type="PATRIC" id="fig|272563.120.peg.2606"/>
<dbReference type="eggNOG" id="COG0481">
    <property type="taxonomic scope" value="Bacteria"/>
</dbReference>
<dbReference type="OrthoDB" id="9801591at2"/>
<dbReference type="PhylomeDB" id="Q182F4"/>
<dbReference type="BioCyc" id="PDIF272563:G12WB-2622-MONOMER"/>
<dbReference type="Proteomes" id="UP000001978">
    <property type="component" value="Chromosome"/>
</dbReference>
<dbReference type="GO" id="GO:0005886">
    <property type="term" value="C:plasma membrane"/>
    <property type="evidence" value="ECO:0007669"/>
    <property type="project" value="UniProtKB-SubCell"/>
</dbReference>
<dbReference type="GO" id="GO:0005525">
    <property type="term" value="F:GTP binding"/>
    <property type="evidence" value="ECO:0007669"/>
    <property type="project" value="UniProtKB-UniRule"/>
</dbReference>
<dbReference type="GO" id="GO:0003924">
    <property type="term" value="F:GTPase activity"/>
    <property type="evidence" value="ECO:0007669"/>
    <property type="project" value="UniProtKB-UniRule"/>
</dbReference>
<dbReference type="GO" id="GO:0043022">
    <property type="term" value="F:ribosome binding"/>
    <property type="evidence" value="ECO:0007669"/>
    <property type="project" value="UniProtKB-UniRule"/>
</dbReference>
<dbReference type="GO" id="GO:0003746">
    <property type="term" value="F:translation elongation factor activity"/>
    <property type="evidence" value="ECO:0007669"/>
    <property type="project" value="UniProtKB-UniRule"/>
</dbReference>
<dbReference type="GO" id="GO:0045727">
    <property type="term" value="P:positive regulation of translation"/>
    <property type="evidence" value="ECO:0007669"/>
    <property type="project" value="UniProtKB-UniRule"/>
</dbReference>
<dbReference type="CDD" id="cd03699">
    <property type="entry name" value="EF4_II"/>
    <property type="match status" value="1"/>
</dbReference>
<dbReference type="CDD" id="cd16260">
    <property type="entry name" value="EF4_III"/>
    <property type="match status" value="1"/>
</dbReference>
<dbReference type="CDD" id="cd01890">
    <property type="entry name" value="LepA"/>
    <property type="match status" value="1"/>
</dbReference>
<dbReference type="CDD" id="cd03709">
    <property type="entry name" value="lepA_C"/>
    <property type="match status" value="1"/>
</dbReference>
<dbReference type="FunFam" id="3.40.50.300:FF:000078">
    <property type="entry name" value="Elongation factor 4"/>
    <property type="match status" value="1"/>
</dbReference>
<dbReference type="FunFam" id="2.40.30.10:FF:000015">
    <property type="entry name" value="Translation factor GUF1, mitochondrial"/>
    <property type="match status" value="1"/>
</dbReference>
<dbReference type="FunFam" id="3.30.70.240:FF:000007">
    <property type="entry name" value="Translation factor GUF1, mitochondrial"/>
    <property type="match status" value="1"/>
</dbReference>
<dbReference type="FunFam" id="3.30.70.2570:FF:000001">
    <property type="entry name" value="Translation factor GUF1, mitochondrial"/>
    <property type="match status" value="1"/>
</dbReference>
<dbReference type="FunFam" id="3.30.70.870:FF:000004">
    <property type="entry name" value="Translation factor GUF1, mitochondrial"/>
    <property type="match status" value="1"/>
</dbReference>
<dbReference type="Gene3D" id="3.30.70.240">
    <property type="match status" value="1"/>
</dbReference>
<dbReference type="Gene3D" id="3.30.70.2570">
    <property type="entry name" value="Elongation factor 4, C-terminal domain"/>
    <property type="match status" value="1"/>
</dbReference>
<dbReference type="Gene3D" id="3.30.70.870">
    <property type="entry name" value="Elongation Factor G (Translational Gtpase), domain 3"/>
    <property type="match status" value="1"/>
</dbReference>
<dbReference type="Gene3D" id="3.40.50.300">
    <property type="entry name" value="P-loop containing nucleotide triphosphate hydrolases"/>
    <property type="match status" value="1"/>
</dbReference>
<dbReference type="Gene3D" id="2.40.30.10">
    <property type="entry name" value="Translation factors"/>
    <property type="match status" value="1"/>
</dbReference>
<dbReference type="HAMAP" id="MF_00071">
    <property type="entry name" value="LepA"/>
    <property type="match status" value="1"/>
</dbReference>
<dbReference type="InterPro" id="IPR006297">
    <property type="entry name" value="EF-4"/>
</dbReference>
<dbReference type="InterPro" id="IPR035647">
    <property type="entry name" value="EFG_III/V"/>
</dbReference>
<dbReference type="InterPro" id="IPR000640">
    <property type="entry name" value="EFG_V-like"/>
</dbReference>
<dbReference type="InterPro" id="IPR004161">
    <property type="entry name" value="EFTu-like_2"/>
</dbReference>
<dbReference type="InterPro" id="IPR031157">
    <property type="entry name" value="G_TR_CS"/>
</dbReference>
<dbReference type="InterPro" id="IPR038363">
    <property type="entry name" value="LepA_C_sf"/>
</dbReference>
<dbReference type="InterPro" id="IPR013842">
    <property type="entry name" value="LepA_CTD"/>
</dbReference>
<dbReference type="InterPro" id="IPR035654">
    <property type="entry name" value="LepA_IV"/>
</dbReference>
<dbReference type="InterPro" id="IPR027417">
    <property type="entry name" value="P-loop_NTPase"/>
</dbReference>
<dbReference type="InterPro" id="IPR005225">
    <property type="entry name" value="Small_GTP-bd"/>
</dbReference>
<dbReference type="InterPro" id="IPR000795">
    <property type="entry name" value="T_Tr_GTP-bd_dom"/>
</dbReference>
<dbReference type="InterPro" id="IPR009000">
    <property type="entry name" value="Transl_B-barrel_sf"/>
</dbReference>
<dbReference type="NCBIfam" id="TIGR01393">
    <property type="entry name" value="lepA"/>
    <property type="match status" value="1"/>
</dbReference>
<dbReference type="NCBIfam" id="TIGR00231">
    <property type="entry name" value="small_GTP"/>
    <property type="match status" value="1"/>
</dbReference>
<dbReference type="PANTHER" id="PTHR43512:SF4">
    <property type="entry name" value="TRANSLATION FACTOR GUF1 HOMOLOG, CHLOROPLASTIC"/>
    <property type="match status" value="1"/>
</dbReference>
<dbReference type="PANTHER" id="PTHR43512">
    <property type="entry name" value="TRANSLATION FACTOR GUF1-RELATED"/>
    <property type="match status" value="1"/>
</dbReference>
<dbReference type="Pfam" id="PF00679">
    <property type="entry name" value="EFG_C"/>
    <property type="match status" value="1"/>
</dbReference>
<dbReference type="Pfam" id="PF00009">
    <property type="entry name" value="GTP_EFTU"/>
    <property type="match status" value="1"/>
</dbReference>
<dbReference type="Pfam" id="PF03144">
    <property type="entry name" value="GTP_EFTU_D2"/>
    <property type="match status" value="1"/>
</dbReference>
<dbReference type="Pfam" id="PF06421">
    <property type="entry name" value="LepA_C"/>
    <property type="match status" value="1"/>
</dbReference>
<dbReference type="PRINTS" id="PR00315">
    <property type="entry name" value="ELONGATNFCT"/>
</dbReference>
<dbReference type="SMART" id="SM00838">
    <property type="entry name" value="EFG_C"/>
    <property type="match status" value="1"/>
</dbReference>
<dbReference type="SUPFAM" id="SSF54980">
    <property type="entry name" value="EF-G C-terminal domain-like"/>
    <property type="match status" value="2"/>
</dbReference>
<dbReference type="SUPFAM" id="SSF52540">
    <property type="entry name" value="P-loop containing nucleoside triphosphate hydrolases"/>
    <property type="match status" value="1"/>
</dbReference>
<dbReference type="SUPFAM" id="SSF50447">
    <property type="entry name" value="Translation proteins"/>
    <property type="match status" value="1"/>
</dbReference>
<dbReference type="PROSITE" id="PS00301">
    <property type="entry name" value="G_TR_1"/>
    <property type="match status" value="1"/>
</dbReference>
<dbReference type="PROSITE" id="PS51722">
    <property type="entry name" value="G_TR_2"/>
    <property type="match status" value="1"/>
</dbReference>
<sequence>MDNKQSRTRNFSIIAHIDHGKSTLADRLIQQTGLVSERDMKSQLLDNMDLERERGITIKLQNIRLMYKAKDGNEYYLNLIDTPGHVDFNYEVSRSLAACEGALLVVDAAQGVEAQTLANVYLAIDQDLEILPIINKIDLPSARPEEVKNEIEDLIGLDSSEAPLISAKTGLNIEDVLEDIVKNVPPPKGDNEAPLKALIFDSYYDAYKGVVAYVRVFEGTVKKGMTIKMMNTNKKFEVTEVGVMAPGQTELSELSAGDVGYIAASIKDIRSCRVGDTITDSNNPTEEPLPGYKKATPMVYCGIYPGEGEKYENVRDALEKLQVNDAALEYEAETSAALGFGFRCGFLGLLHMEIMQERLEREFNLDIITTAPSVIYRVTKMDGEVVMIQNPANLPEPSEIKMIEEPIVKGDIIVPKDYVGVVMELCQERRGNMLNMEYIDERRVMLHYDLPLNEVVYDFFDALKSRTRGYGSLDYEVKGYVASTLVKLDILINKEQVDALSFIVHETRAFPRGKAMCEKLKGEIPRHQFAIPIQAAVGNKVIARETISALRKDVLAKCYGGDISRKKKLLEKQKEGKKRMRQIGSVEVPQKAFMSVLKLDE</sequence>
<keyword id="KW-1003">Cell membrane</keyword>
<keyword id="KW-0342">GTP-binding</keyword>
<keyword id="KW-0378">Hydrolase</keyword>
<keyword id="KW-0472">Membrane</keyword>
<keyword id="KW-0547">Nucleotide-binding</keyword>
<keyword id="KW-0648">Protein biosynthesis</keyword>
<keyword id="KW-1185">Reference proteome</keyword>
<comment type="function">
    <text evidence="1">Required for accurate and efficient protein synthesis under certain stress conditions. May act as a fidelity factor of the translation reaction, by catalyzing a one-codon backward translocation of tRNAs on improperly translocated ribosomes. Back-translocation proceeds from a post-translocation (POST) complex to a pre-translocation (PRE) complex, thus giving elongation factor G a second chance to translocate the tRNAs correctly. Binds to ribosomes in a GTP-dependent manner.</text>
</comment>
<comment type="catalytic activity">
    <reaction evidence="1">
        <text>GTP + H2O = GDP + phosphate + H(+)</text>
        <dbReference type="Rhea" id="RHEA:19669"/>
        <dbReference type="ChEBI" id="CHEBI:15377"/>
        <dbReference type="ChEBI" id="CHEBI:15378"/>
        <dbReference type="ChEBI" id="CHEBI:37565"/>
        <dbReference type="ChEBI" id="CHEBI:43474"/>
        <dbReference type="ChEBI" id="CHEBI:58189"/>
        <dbReference type="EC" id="3.6.5.n1"/>
    </reaction>
</comment>
<comment type="subcellular location">
    <subcellularLocation>
        <location evidence="1">Cell membrane</location>
        <topology evidence="1">Peripheral membrane protein</topology>
        <orientation evidence="1">Cytoplasmic side</orientation>
    </subcellularLocation>
</comment>
<comment type="similarity">
    <text evidence="1">Belongs to the TRAFAC class translation factor GTPase superfamily. Classic translation factor GTPase family. LepA subfamily.</text>
</comment>
<evidence type="ECO:0000255" key="1">
    <source>
        <dbReference type="HAMAP-Rule" id="MF_00071"/>
    </source>
</evidence>
<gene>
    <name evidence="1" type="primary">lepA</name>
    <name type="ordered locus">CD630_24670</name>
</gene>
<feature type="chain" id="PRO_0000265648" description="Elongation factor 4">
    <location>
        <begin position="1"/>
        <end position="601"/>
    </location>
</feature>
<feature type="domain" description="tr-type G">
    <location>
        <begin position="6"/>
        <end position="188"/>
    </location>
</feature>
<feature type="binding site" evidence="1">
    <location>
        <begin position="18"/>
        <end position="23"/>
    </location>
    <ligand>
        <name>GTP</name>
        <dbReference type="ChEBI" id="CHEBI:37565"/>
    </ligand>
</feature>
<feature type="binding site" evidence="1">
    <location>
        <begin position="135"/>
        <end position="138"/>
    </location>
    <ligand>
        <name>GTP</name>
        <dbReference type="ChEBI" id="CHEBI:37565"/>
    </ligand>
</feature>
<reference key="1">
    <citation type="journal article" date="2006" name="Nat. Genet.">
        <title>The multidrug-resistant human pathogen Clostridium difficile has a highly mobile, mosaic genome.</title>
        <authorList>
            <person name="Sebaihia M."/>
            <person name="Wren B.W."/>
            <person name="Mullany P."/>
            <person name="Fairweather N.F."/>
            <person name="Minton N."/>
            <person name="Stabler R."/>
            <person name="Thomson N.R."/>
            <person name="Roberts A.P."/>
            <person name="Cerdeno-Tarraga A.M."/>
            <person name="Wang H."/>
            <person name="Holden M.T.G."/>
            <person name="Wright A."/>
            <person name="Churcher C."/>
            <person name="Quail M.A."/>
            <person name="Baker S."/>
            <person name="Bason N."/>
            <person name="Brooks K."/>
            <person name="Chillingworth T."/>
            <person name="Cronin A."/>
            <person name="Davis P."/>
            <person name="Dowd L."/>
            <person name="Fraser A."/>
            <person name="Feltwell T."/>
            <person name="Hance Z."/>
            <person name="Holroyd S."/>
            <person name="Jagels K."/>
            <person name="Moule S."/>
            <person name="Mungall K."/>
            <person name="Price C."/>
            <person name="Rabbinowitsch E."/>
            <person name="Sharp S."/>
            <person name="Simmonds M."/>
            <person name="Stevens K."/>
            <person name="Unwin L."/>
            <person name="Whithead S."/>
            <person name="Dupuy B."/>
            <person name="Dougan G."/>
            <person name="Barrell B."/>
            <person name="Parkhill J."/>
        </authorList>
    </citation>
    <scope>NUCLEOTIDE SEQUENCE [LARGE SCALE GENOMIC DNA]</scope>
    <source>
        <strain>630</strain>
    </source>
</reference>
<accession>Q182F4</accession>
<organism>
    <name type="scientific">Clostridioides difficile (strain 630)</name>
    <name type="common">Peptoclostridium difficile</name>
    <dbReference type="NCBI Taxonomy" id="272563"/>
    <lineage>
        <taxon>Bacteria</taxon>
        <taxon>Bacillati</taxon>
        <taxon>Bacillota</taxon>
        <taxon>Clostridia</taxon>
        <taxon>Peptostreptococcales</taxon>
        <taxon>Peptostreptococcaceae</taxon>
        <taxon>Clostridioides</taxon>
    </lineage>
</organism>
<proteinExistence type="inferred from homology"/>